<accession>B2U2A9</accession>
<dbReference type="EC" id="1.7.1.7" evidence="1"/>
<dbReference type="EMBL" id="CP001063">
    <property type="protein sequence ID" value="ACD10521.1"/>
    <property type="molecule type" value="Genomic_DNA"/>
</dbReference>
<dbReference type="RefSeq" id="WP_001217319.1">
    <property type="nucleotide sequence ID" value="NC_010658.1"/>
</dbReference>
<dbReference type="SMR" id="B2U2A9"/>
<dbReference type="STRING" id="344609.SbBS512_E0097"/>
<dbReference type="KEGG" id="sbc:SbBS512_E0097"/>
<dbReference type="HOGENOM" id="CLU_022552_5_3_6"/>
<dbReference type="Proteomes" id="UP000001030">
    <property type="component" value="Chromosome"/>
</dbReference>
<dbReference type="GO" id="GO:0005829">
    <property type="term" value="C:cytosol"/>
    <property type="evidence" value="ECO:0007669"/>
    <property type="project" value="TreeGrafter"/>
</dbReference>
<dbReference type="GO" id="GO:1902560">
    <property type="term" value="C:GMP reductase complex"/>
    <property type="evidence" value="ECO:0007669"/>
    <property type="project" value="InterPro"/>
</dbReference>
<dbReference type="GO" id="GO:0003920">
    <property type="term" value="F:GMP reductase activity"/>
    <property type="evidence" value="ECO:0007669"/>
    <property type="project" value="UniProtKB-UniRule"/>
</dbReference>
<dbReference type="GO" id="GO:0046872">
    <property type="term" value="F:metal ion binding"/>
    <property type="evidence" value="ECO:0007669"/>
    <property type="project" value="UniProtKB-KW"/>
</dbReference>
<dbReference type="GO" id="GO:0006163">
    <property type="term" value="P:purine nucleotide metabolic process"/>
    <property type="evidence" value="ECO:0007669"/>
    <property type="project" value="UniProtKB-UniRule"/>
</dbReference>
<dbReference type="CDD" id="cd00381">
    <property type="entry name" value="IMPDH"/>
    <property type="match status" value="1"/>
</dbReference>
<dbReference type="FunFam" id="3.20.20.70:FF:000012">
    <property type="entry name" value="GMP reductase"/>
    <property type="match status" value="1"/>
</dbReference>
<dbReference type="Gene3D" id="3.20.20.70">
    <property type="entry name" value="Aldolase class I"/>
    <property type="match status" value="1"/>
</dbReference>
<dbReference type="HAMAP" id="MF_00596">
    <property type="entry name" value="GMP_reduct_type1"/>
    <property type="match status" value="1"/>
</dbReference>
<dbReference type="InterPro" id="IPR013785">
    <property type="entry name" value="Aldolase_TIM"/>
</dbReference>
<dbReference type="InterPro" id="IPR050139">
    <property type="entry name" value="GMP_reductase"/>
</dbReference>
<dbReference type="InterPro" id="IPR005993">
    <property type="entry name" value="GMPR"/>
</dbReference>
<dbReference type="InterPro" id="IPR015875">
    <property type="entry name" value="IMP_DH/GMP_Rdtase_CS"/>
</dbReference>
<dbReference type="InterPro" id="IPR001093">
    <property type="entry name" value="IMP_DH_GMPRt"/>
</dbReference>
<dbReference type="NCBIfam" id="TIGR01305">
    <property type="entry name" value="GMP_reduct_1"/>
    <property type="match status" value="1"/>
</dbReference>
<dbReference type="NCBIfam" id="NF003470">
    <property type="entry name" value="PRK05096.1"/>
    <property type="match status" value="1"/>
</dbReference>
<dbReference type="PANTHER" id="PTHR43170">
    <property type="entry name" value="GMP REDUCTASE"/>
    <property type="match status" value="1"/>
</dbReference>
<dbReference type="PANTHER" id="PTHR43170:SF5">
    <property type="entry name" value="GMP REDUCTASE"/>
    <property type="match status" value="1"/>
</dbReference>
<dbReference type="Pfam" id="PF00478">
    <property type="entry name" value="IMPDH"/>
    <property type="match status" value="1"/>
</dbReference>
<dbReference type="PIRSF" id="PIRSF000235">
    <property type="entry name" value="GMP_reductase"/>
    <property type="match status" value="1"/>
</dbReference>
<dbReference type="SMART" id="SM01240">
    <property type="entry name" value="IMPDH"/>
    <property type="match status" value="1"/>
</dbReference>
<dbReference type="SUPFAM" id="SSF51412">
    <property type="entry name" value="Inosine monophosphate dehydrogenase (IMPDH)"/>
    <property type="match status" value="1"/>
</dbReference>
<dbReference type="PROSITE" id="PS00487">
    <property type="entry name" value="IMP_DH_GMP_RED"/>
    <property type="match status" value="1"/>
</dbReference>
<gene>
    <name evidence="1" type="primary">guaC</name>
    <name type="ordered locus">SbBS512_E0097</name>
</gene>
<keyword id="KW-0479">Metal-binding</keyword>
<keyword id="KW-0521">NADP</keyword>
<keyword id="KW-0560">Oxidoreductase</keyword>
<keyword id="KW-0630">Potassium</keyword>
<keyword id="KW-1185">Reference proteome</keyword>
<protein>
    <recommendedName>
        <fullName evidence="1">GMP reductase</fullName>
        <ecNumber evidence="1">1.7.1.7</ecNumber>
    </recommendedName>
    <alternativeName>
        <fullName evidence="1">Guanosine 5'-monophosphate oxidoreductase</fullName>
        <shortName evidence="1">Guanosine monophosphate reductase</shortName>
    </alternativeName>
</protein>
<feature type="chain" id="PRO_1000129868" description="GMP reductase">
    <location>
        <begin position="1"/>
        <end position="347"/>
    </location>
</feature>
<feature type="active site" description="Thioimidate intermediate" evidence="1">
    <location>
        <position position="186"/>
    </location>
</feature>
<feature type="binding site" evidence="1">
    <location>
        <begin position="108"/>
        <end position="131"/>
    </location>
    <ligand>
        <name>NADP(+)</name>
        <dbReference type="ChEBI" id="CHEBI:58349"/>
    </ligand>
</feature>
<feature type="binding site" evidence="1">
    <location>
        <position position="181"/>
    </location>
    <ligand>
        <name>K(+)</name>
        <dbReference type="ChEBI" id="CHEBI:29103"/>
    </ligand>
</feature>
<feature type="binding site" evidence="1">
    <location>
        <position position="183"/>
    </location>
    <ligand>
        <name>K(+)</name>
        <dbReference type="ChEBI" id="CHEBI:29103"/>
    </ligand>
</feature>
<feature type="binding site" evidence="1">
    <location>
        <begin position="216"/>
        <end position="239"/>
    </location>
    <ligand>
        <name>NADP(+)</name>
        <dbReference type="ChEBI" id="CHEBI:58349"/>
    </ligand>
</feature>
<comment type="function">
    <text evidence="1">Catalyzes the irreversible NADPH-dependent deamination of GMP to IMP. It functions in the conversion of nucleobase, nucleoside and nucleotide derivatives of G to A nucleotides, and in maintaining the intracellular balance of A and G nucleotides.</text>
</comment>
<comment type="catalytic activity">
    <reaction evidence="1">
        <text>IMP + NH4(+) + NADP(+) = GMP + NADPH + 2 H(+)</text>
        <dbReference type="Rhea" id="RHEA:17185"/>
        <dbReference type="ChEBI" id="CHEBI:15378"/>
        <dbReference type="ChEBI" id="CHEBI:28938"/>
        <dbReference type="ChEBI" id="CHEBI:57783"/>
        <dbReference type="ChEBI" id="CHEBI:58053"/>
        <dbReference type="ChEBI" id="CHEBI:58115"/>
        <dbReference type="ChEBI" id="CHEBI:58349"/>
        <dbReference type="EC" id="1.7.1.7"/>
    </reaction>
</comment>
<comment type="subunit">
    <text evidence="1">Homotetramer.</text>
</comment>
<comment type="similarity">
    <text evidence="1">Belongs to the IMPDH/GMPR family. GuaC type 1 subfamily.</text>
</comment>
<sequence>MRIEEDLKLGFKDVLIRPKRSTLKSRSDVELERQFTFKHSDQSWSGVPIIAANMDTVGTFSMASALASFDILTAVHKHYSVEEWQAFINNSSADVLKHVMVSTGTSDADFEKTKQILDLNPALNFVCIDVANGYSEHVVQFVAKAREAWPTKTICAGNVVTGEMCEELILSGADIVKVGIGPGSVCTTRVKTGVGYPQLSAVIECADAAHGLGGMIVSDGGCTTPGDVAKAFGGGADFVMLGGMLAGHEESGGRIVEENGEKFMLFYGMSSESAMKRHVGGVAEYRAAEGKTVKLPLRGPVENTARDILGGLRSACTYVGASRLKELTKRTTFIRVQEQENRIFNNL</sequence>
<reference key="1">
    <citation type="submission" date="2008-05" db="EMBL/GenBank/DDBJ databases">
        <title>Complete sequence of Shigella boydii serotype 18 strain BS512.</title>
        <authorList>
            <person name="Rasko D.A."/>
            <person name="Rosovitz M."/>
            <person name="Maurelli A.T."/>
            <person name="Myers G."/>
            <person name="Seshadri R."/>
            <person name="Cer R."/>
            <person name="Jiang L."/>
            <person name="Ravel J."/>
            <person name="Sebastian Y."/>
        </authorList>
    </citation>
    <scope>NUCLEOTIDE SEQUENCE [LARGE SCALE GENOMIC DNA]</scope>
    <source>
        <strain>CDC 3083-94 / BS512</strain>
    </source>
</reference>
<organism>
    <name type="scientific">Shigella boydii serotype 18 (strain CDC 3083-94 / BS512)</name>
    <dbReference type="NCBI Taxonomy" id="344609"/>
    <lineage>
        <taxon>Bacteria</taxon>
        <taxon>Pseudomonadati</taxon>
        <taxon>Pseudomonadota</taxon>
        <taxon>Gammaproteobacteria</taxon>
        <taxon>Enterobacterales</taxon>
        <taxon>Enterobacteriaceae</taxon>
        <taxon>Shigella</taxon>
    </lineage>
</organism>
<evidence type="ECO:0000255" key="1">
    <source>
        <dbReference type="HAMAP-Rule" id="MF_00596"/>
    </source>
</evidence>
<proteinExistence type="inferred from homology"/>
<name>GUAC_SHIB3</name>